<keyword id="KW-0414">Isoprene biosynthesis</keyword>
<keyword id="KW-0460">Magnesium</keyword>
<keyword id="KW-0479">Metal-binding</keyword>
<keyword id="KW-0784">Thiamine biosynthesis</keyword>
<keyword id="KW-0786">Thiamine pyrophosphate</keyword>
<keyword id="KW-0808">Transferase</keyword>
<proteinExistence type="inferred from homology"/>
<reference key="1">
    <citation type="journal article" date="2009" name="Genome Biol.">
        <title>Genomic and genetic analyses of diversity and plant interactions of Pseudomonas fluorescens.</title>
        <authorList>
            <person name="Silby M.W."/>
            <person name="Cerdeno-Tarraga A.M."/>
            <person name="Vernikos G.S."/>
            <person name="Giddens S.R."/>
            <person name="Jackson R.W."/>
            <person name="Preston G.M."/>
            <person name="Zhang X.-X."/>
            <person name="Moon C.D."/>
            <person name="Gehrig S.M."/>
            <person name="Godfrey S.A.C."/>
            <person name="Knight C.G."/>
            <person name="Malone J.G."/>
            <person name="Robinson Z."/>
            <person name="Spiers A.J."/>
            <person name="Harris S."/>
            <person name="Challis G.L."/>
            <person name="Yaxley A.M."/>
            <person name="Harris D."/>
            <person name="Seeger K."/>
            <person name="Murphy L."/>
            <person name="Rutter S."/>
            <person name="Squares R."/>
            <person name="Quail M.A."/>
            <person name="Saunders E."/>
            <person name="Mavromatis K."/>
            <person name="Brettin T.S."/>
            <person name="Bentley S.D."/>
            <person name="Hothersall J."/>
            <person name="Stephens E."/>
            <person name="Thomas C.M."/>
            <person name="Parkhill J."/>
            <person name="Levy S.B."/>
            <person name="Rainey P.B."/>
            <person name="Thomson N.R."/>
        </authorList>
    </citation>
    <scope>NUCLEOTIDE SEQUENCE [LARGE SCALE GENOMIC DNA]</scope>
    <source>
        <strain>Pf0-1</strain>
    </source>
</reference>
<comment type="function">
    <text evidence="1">Catalyzes the acyloin condensation reaction between C atoms 2 and 3 of pyruvate and glyceraldehyde 3-phosphate to yield 1-deoxy-D-xylulose-5-phosphate (DXP).</text>
</comment>
<comment type="catalytic activity">
    <reaction evidence="1">
        <text>D-glyceraldehyde 3-phosphate + pyruvate + H(+) = 1-deoxy-D-xylulose 5-phosphate + CO2</text>
        <dbReference type="Rhea" id="RHEA:12605"/>
        <dbReference type="ChEBI" id="CHEBI:15361"/>
        <dbReference type="ChEBI" id="CHEBI:15378"/>
        <dbReference type="ChEBI" id="CHEBI:16526"/>
        <dbReference type="ChEBI" id="CHEBI:57792"/>
        <dbReference type="ChEBI" id="CHEBI:59776"/>
        <dbReference type="EC" id="2.2.1.7"/>
    </reaction>
</comment>
<comment type="cofactor">
    <cofactor evidence="1">
        <name>Mg(2+)</name>
        <dbReference type="ChEBI" id="CHEBI:18420"/>
    </cofactor>
    <text evidence="1">Binds 1 Mg(2+) ion per subunit.</text>
</comment>
<comment type="cofactor">
    <cofactor evidence="1">
        <name>thiamine diphosphate</name>
        <dbReference type="ChEBI" id="CHEBI:58937"/>
    </cofactor>
    <text evidence="1">Binds 1 thiamine pyrophosphate per subunit.</text>
</comment>
<comment type="pathway">
    <text evidence="1">Metabolic intermediate biosynthesis; 1-deoxy-D-xylulose 5-phosphate biosynthesis; 1-deoxy-D-xylulose 5-phosphate from D-glyceraldehyde 3-phosphate and pyruvate: step 1/1.</text>
</comment>
<comment type="subunit">
    <text evidence="1">Homodimer.</text>
</comment>
<comment type="similarity">
    <text evidence="1">Belongs to the transketolase family. DXPS subfamily.</text>
</comment>
<feature type="chain" id="PRO_0000256461" description="1-deoxy-D-xylulose-5-phosphate synthase">
    <location>
        <begin position="1"/>
        <end position="632"/>
    </location>
</feature>
<feature type="region of interest" description="Disordered" evidence="2">
    <location>
        <begin position="1"/>
        <end position="25"/>
    </location>
</feature>
<feature type="binding site" evidence="1">
    <location>
        <position position="87"/>
    </location>
    <ligand>
        <name>thiamine diphosphate</name>
        <dbReference type="ChEBI" id="CHEBI:58937"/>
    </ligand>
</feature>
<feature type="binding site" evidence="1">
    <location>
        <begin position="128"/>
        <end position="130"/>
    </location>
    <ligand>
        <name>thiamine diphosphate</name>
        <dbReference type="ChEBI" id="CHEBI:58937"/>
    </ligand>
</feature>
<feature type="binding site" evidence="1">
    <location>
        <position position="159"/>
    </location>
    <ligand>
        <name>Mg(2+)</name>
        <dbReference type="ChEBI" id="CHEBI:18420"/>
    </ligand>
</feature>
<feature type="binding site" evidence="1">
    <location>
        <begin position="160"/>
        <end position="161"/>
    </location>
    <ligand>
        <name>thiamine diphosphate</name>
        <dbReference type="ChEBI" id="CHEBI:58937"/>
    </ligand>
</feature>
<feature type="binding site" evidence="1">
    <location>
        <position position="188"/>
    </location>
    <ligand>
        <name>Mg(2+)</name>
        <dbReference type="ChEBI" id="CHEBI:18420"/>
    </ligand>
</feature>
<feature type="binding site" evidence="1">
    <location>
        <position position="188"/>
    </location>
    <ligand>
        <name>thiamine diphosphate</name>
        <dbReference type="ChEBI" id="CHEBI:58937"/>
    </ligand>
</feature>
<feature type="binding site" evidence="1">
    <location>
        <position position="295"/>
    </location>
    <ligand>
        <name>thiamine diphosphate</name>
        <dbReference type="ChEBI" id="CHEBI:58937"/>
    </ligand>
</feature>
<feature type="binding site" evidence="1">
    <location>
        <position position="378"/>
    </location>
    <ligand>
        <name>thiamine diphosphate</name>
        <dbReference type="ChEBI" id="CHEBI:58937"/>
    </ligand>
</feature>
<accession>Q3K660</accession>
<name>DXS_PSEPF</name>
<evidence type="ECO:0000255" key="1">
    <source>
        <dbReference type="HAMAP-Rule" id="MF_00315"/>
    </source>
</evidence>
<evidence type="ECO:0000256" key="2">
    <source>
        <dbReference type="SAM" id="MobiDB-lite"/>
    </source>
</evidence>
<gene>
    <name evidence="1" type="primary">dxs</name>
    <name type="ordered locus">Pfl01_5007</name>
</gene>
<sequence>MPTTFHEIPRKRPTTPLLDRANTPDGLRRLGEAELETLADELRLELLYTVGQTGGHFGAGLGVIELTIALHYVFDTPDDRLVWDVGHQAYPHKILTGRRERMETLRQKDGIAAFPRRSESEYDTFGVGHSSTSISAALGMAIAARLQNSDRKAIAVIGDGALTAGMAFEALNHAPEVDANMLVILNDNDMSISRNVGGLSNYLAKILSSRTYASMREGSKKVLSRLPGAWEIARRTEEYAKGMLVPGTLFEELGWNYIGPIDGHDLPTLIATLRNMRDLKGPQFLHIVTKKGKGFAPAEVDPIGYHAITKLEPLDAPAAAPKKAGGPKYSGVFGEWLCDMAAADPRLVGITPAMKEGSDLVAFSERFPLRYFDVAIAEQHAVTLAAGMACEGAKPVVAIYSTFLQRGYDQLVHDVAVQNLDVLFAIDRAGLVGEDGPTHAGSFDLSFLRCIPGMVIMTPSDENELRKMLTTGHLYNGPAAVRYPRGTGPNATIEKDLEPIEIGKGVVRRQGSKVALLVFGVQMAEALKVAETLDATVVDMRFVKPMDEALVREIANSHDLLVTIEENAIMGGAGGAVSEFLARENILKSVLHLGLPDVYVEHAKPAQMLAECGLDEVGIEAAVRERLELLNR</sequence>
<dbReference type="EC" id="2.2.1.7" evidence="1"/>
<dbReference type="EMBL" id="CP000094">
    <property type="protein sequence ID" value="ABA76744.1"/>
    <property type="molecule type" value="Genomic_DNA"/>
</dbReference>
<dbReference type="RefSeq" id="WP_011336128.1">
    <property type="nucleotide sequence ID" value="NC_007492.2"/>
</dbReference>
<dbReference type="SMR" id="Q3K660"/>
<dbReference type="KEGG" id="pfo:Pfl01_5007"/>
<dbReference type="eggNOG" id="COG1154">
    <property type="taxonomic scope" value="Bacteria"/>
</dbReference>
<dbReference type="HOGENOM" id="CLU_009227_1_4_6"/>
<dbReference type="UniPathway" id="UPA00064">
    <property type="reaction ID" value="UER00091"/>
</dbReference>
<dbReference type="Proteomes" id="UP000002704">
    <property type="component" value="Chromosome"/>
</dbReference>
<dbReference type="GO" id="GO:0005829">
    <property type="term" value="C:cytosol"/>
    <property type="evidence" value="ECO:0007669"/>
    <property type="project" value="TreeGrafter"/>
</dbReference>
<dbReference type="GO" id="GO:0008661">
    <property type="term" value="F:1-deoxy-D-xylulose-5-phosphate synthase activity"/>
    <property type="evidence" value="ECO:0007669"/>
    <property type="project" value="UniProtKB-UniRule"/>
</dbReference>
<dbReference type="GO" id="GO:0000287">
    <property type="term" value="F:magnesium ion binding"/>
    <property type="evidence" value="ECO:0007669"/>
    <property type="project" value="UniProtKB-UniRule"/>
</dbReference>
<dbReference type="GO" id="GO:0030976">
    <property type="term" value="F:thiamine pyrophosphate binding"/>
    <property type="evidence" value="ECO:0007669"/>
    <property type="project" value="UniProtKB-UniRule"/>
</dbReference>
<dbReference type="GO" id="GO:0052865">
    <property type="term" value="P:1-deoxy-D-xylulose 5-phosphate biosynthetic process"/>
    <property type="evidence" value="ECO:0007669"/>
    <property type="project" value="UniProtKB-UniPathway"/>
</dbReference>
<dbReference type="GO" id="GO:0019288">
    <property type="term" value="P:isopentenyl diphosphate biosynthetic process, methylerythritol 4-phosphate pathway"/>
    <property type="evidence" value="ECO:0007669"/>
    <property type="project" value="TreeGrafter"/>
</dbReference>
<dbReference type="GO" id="GO:0016114">
    <property type="term" value="P:terpenoid biosynthetic process"/>
    <property type="evidence" value="ECO:0007669"/>
    <property type="project" value="UniProtKB-UniRule"/>
</dbReference>
<dbReference type="GO" id="GO:0009228">
    <property type="term" value="P:thiamine biosynthetic process"/>
    <property type="evidence" value="ECO:0007669"/>
    <property type="project" value="UniProtKB-UniRule"/>
</dbReference>
<dbReference type="CDD" id="cd02007">
    <property type="entry name" value="TPP_DXS"/>
    <property type="match status" value="1"/>
</dbReference>
<dbReference type="CDD" id="cd07033">
    <property type="entry name" value="TPP_PYR_DXS_TK_like"/>
    <property type="match status" value="1"/>
</dbReference>
<dbReference type="FunFam" id="3.40.50.920:FF:000002">
    <property type="entry name" value="1-deoxy-D-xylulose-5-phosphate synthase"/>
    <property type="match status" value="1"/>
</dbReference>
<dbReference type="FunFam" id="3.40.50.970:FF:000005">
    <property type="entry name" value="1-deoxy-D-xylulose-5-phosphate synthase"/>
    <property type="match status" value="1"/>
</dbReference>
<dbReference type="Gene3D" id="3.40.50.920">
    <property type="match status" value="1"/>
</dbReference>
<dbReference type="Gene3D" id="3.40.50.970">
    <property type="match status" value="2"/>
</dbReference>
<dbReference type="HAMAP" id="MF_00315">
    <property type="entry name" value="DXP_synth"/>
    <property type="match status" value="1"/>
</dbReference>
<dbReference type="InterPro" id="IPR005477">
    <property type="entry name" value="Dxylulose-5-P_synthase"/>
</dbReference>
<dbReference type="InterPro" id="IPR029061">
    <property type="entry name" value="THDP-binding"/>
</dbReference>
<dbReference type="InterPro" id="IPR009014">
    <property type="entry name" value="Transketo_C/PFOR_II"/>
</dbReference>
<dbReference type="InterPro" id="IPR005475">
    <property type="entry name" value="Transketolase-like_Pyr-bd"/>
</dbReference>
<dbReference type="InterPro" id="IPR020826">
    <property type="entry name" value="Transketolase_BS"/>
</dbReference>
<dbReference type="InterPro" id="IPR033248">
    <property type="entry name" value="Transketolase_C"/>
</dbReference>
<dbReference type="NCBIfam" id="TIGR00204">
    <property type="entry name" value="dxs"/>
    <property type="match status" value="1"/>
</dbReference>
<dbReference type="NCBIfam" id="NF003933">
    <property type="entry name" value="PRK05444.2-2"/>
    <property type="match status" value="1"/>
</dbReference>
<dbReference type="PANTHER" id="PTHR43322">
    <property type="entry name" value="1-D-DEOXYXYLULOSE 5-PHOSPHATE SYNTHASE-RELATED"/>
    <property type="match status" value="1"/>
</dbReference>
<dbReference type="PANTHER" id="PTHR43322:SF5">
    <property type="entry name" value="1-DEOXY-D-XYLULOSE-5-PHOSPHATE SYNTHASE, CHLOROPLASTIC"/>
    <property type="match status" value="1"/>
</dbReference>
<dbReference type="Pfam" id="PF13292">
    <property type="entry name" value="DXP_synthase_N"/>
    <property type="match status" value="1"/>
</dbReference>
<dbReference type="Pfam" id="PF02779">
    <property type="entry name" value="Transket_pyr"/>
    <property type="match status" value="1"/>
</dbReference>
<dbReference type="Pfam" id="PF02780">
    <property type="entry name" value="Transketolase_C"/>
    <property type="match status" value="1"/>
</dbReference>
<dbReference type="SMART" id="SM00861">
    <property type="entry name" value="Transket_pyr"/>
    <property type="match status" value="1"/>
</dbReference>
<dbReference type="SUPFAM" id="SSF52518">
    <property type="entry name" value="Thiamin diphosphate-binding fold (THDP-binding)"/>
    <property type="match status" value="2"/>
</dbReference>
<dbReference type="SUPFAM" id="SSF52922">
    <property type="entry name" value="TK C-terminal domain-like"/>
    <property type="match status" value="1"/>
</dbReference>
<dbReference type="PROSITE" id="PS00802">
    <property type="entry name" value="TRANSKETOLASE_2"/>
    <property type="match status" value="1"/>
</dbReference>
<protein>
    <recommendedName>
        <fullName evidence="1">1-deoxy-D-xylulose-5-phosphate synthase</fullName>
        <ecNumber evidence="1">2.2.1.7</ecNumber>
    </recommendedName>
    <alternativeName>
        <fullName evidence="1">1-deoxyxylulose-5-phosphate synthase</fullName>
        <shortName evidence="1">DXP synthase</shortName>
        <shortName evidence="1">DXPS</shortName>
    </alternativeName>
</protein>
<organism>
    <name type="scientific">Pseudomonas fluorescens (strain Pf0-1)</name>
    <dbReference type="NCBI Taxonomy" id="205922"/>
    <lineage>
        <taxon>Bacteria</taxon>
        <taxon>Pseudomonadati</taxon>
        <taxon>Pseudomonadota</taxon>
        <taxon>Gammaproteobacteria</taxon>
        <taxon>Pseudomonadales</taxon>
        <taxon>Pseudomonadaceae</taxon>
        <taxon>Pseudomonas</taxon>
    </lineage>
</organism>